<proteinExistence type="inferred from homology"/>
<organism>
    <name type="scientific">Shewanella baltica (strain OS195)</name>
    <dbReference type="NCBI Taxonomy" id="399599"/>
    <lineage>
        <taxon>Bacteria</taxon>
        <taxon>Pseudomonadati</taxon>
        <taxon>Pseudomonadota</taxon>
        <taxon>Gammaproteobacteria</taxon>
        <taxon>Alteromonadales</taxon>
        <taxon>Shewanellaceae</taxon>
        <taxon>Shewanella</taxon>
    </lineage>
</organism>
<name>RPOZ_SHEB9</name>
<sequence length="92" mass="10141">MARVTVEDAVEQIGNRFDMILVAARRARQIAVQGKDPMVEEMNDKPTVIALREIELGLVNAHTLDADERQTVREREAAEIAAVSAIAEGRSL</sequence>
<reference key="1">
    <citation type="submission" date="2007-11" db="EMBL/GenBank/DDBJ databases">
        <title>Complete sequence of chromosome of Shewanella baltica OS195.</title>
        <authorList>
            <consortium name="US DOE Joint Genome Institute"/>
            <person name="Copeland A."/>
            <person name="Lucas S."/>
            <person name="Lapidus A."/>
            <person name="Barry K."/>
            <person name="Glavina del Rio T."/>
            <person name="Dalin E."/>
            <person name="Tice H."/>
            <person name="Pitluck S."/>
            <person name="Chain P."/>
            <person name="Malfatti S."/>
            <person name="Shin M."/>
            <person name="Vergez L."/>
            <person name="Schmutz J."/>
            <person name="Larimer F."/>
            <person name="Land M."/>
            <person name="Hauser L."/>
            <person name="Kyrpides N."/>
            <person name="Kim E."/>
            <person name="Brettar I."/>
            <person name="Rodrigues J."/>
            <person name="Konstantinidis K."/>
            <person name="Klappenbach J."/>
            <person name="Hofle M."/>
            <person name="Tiedje J."/>
            <person name="Richardson P."/>
        </authorList>
    </citation>
    <scope>NUCLEOTIDE SEQUENCE [LARGE SCALE GENOMIC DNA]</scope>
    <source>
        <strain>OS195</strain>
    </source>
</reference>
<accession>A9KXX5</accession>
<keyword id="KW-0240">DNA-directed RNA polymerase</keyword>
<keyword id="KW-0548">Nucleotidyltransferase</keyword>
<keyword id="KW-0804">Transcription</keyword>
<keyword id="KW-0808">Transferase</keyword>
<comment type="function">
    <text evidence="1">Promotes RNA polymerase assembly. Latches the N- and C-terminal regions of the beta' subunit thereby facilitating its interaction with the beta and alpha subunits.</text>
</comment>
<comment type="catalytic activity">
    <reaction evidence="1">
        <text>RNA(n) + a ribonucleoside 5'-triphosphate = RNA(n+1) + diphosphate</text>
        <dbReference type="Rhea" id="RHEA:21248"/>
        <dbReference type="Rhea" id="RHEA-COMP:14527"/>
        <dbReference type="Rhea" id="RHEA-COMP:17342"/>
        <dbReference type="ChEBI" id="CHEBI:33019"/>
        <dbReference type="ChEBI" id="CHEBI:61557"/>
        <dbReference type="ChEBI" id="CHEBI:140395"/>
        <dbReference type="EC" id="2.7.7.6"/>
    </reaction>
</comment>
<comment type="subunit">
    <text evidence="1">The RNAP catalytic core consists of 2 alpha, 1 beta, 1 beta' and 1 omega subunit. When a sigma factor is associated with the core the holoenzyme is formed, which can initiate transcription.</text>
</comment>
<comment type="similarity">
    <text evidence="1">Belongs to the RNA polymerase subunit omega family.</text>
</comment>
<gene>
    <name evidence="1" type="primary">rpoZ</name>
    <name type="ordered locus">Sbal195_0359</name>
</gene>
<feature type="chain" id="PRO_1000079646" description="DNA-directed RNA polymerase subunit omega">
    <location>
        <begin position="1"/>
        <end position="92"/>
    </location>
</feature>
<dbReference type="EC" id="2.7.7.6" evidence="1"/>
<dbReference type="EMBL" id="CP000891">
    <property type="protein sequence ID" value="ABX47540.1"/>
    <property type="molecule type" value="Genomic_DNA"/>
</dbReference>
<dbReference type="RefSeq" id="WP_006079841.1">
    <property type="nucleotide sequence ID" value="NC_009997.1"/>
</dbReference>
<dbReference type="SMR" id="A9KXX5"/>
<dbReference type="GeneID" id="11770701"/>
<dbReference type="KEGG" id="sbn:Sbal195_0359"/>
<dbReference type="HOGENOM" id="CLU_125406_5_3_6"/>
<dbReference type="Proteomes" id="UP000000770">
    <property type="component" value="Chromosome"/>
</dbReference>
<dbReference type="GO" id="GO:0000428">
    <property type="term" value="C:DNA-directed RNA polymerase complex"/>
    <property type="evidence" value="ECO:0007669"/>
    <property type="project" value="UniProtKB-KW"/>
</dbReference>
<dbReference type="GO" id="GO:0003677">
    <property type="term" value="F:DNA binding"/>
    <property type="evidence" value="ECO:0007669"/>
    <property type="project" value="UniProtKB-UniRule"/>
</dbReference>
<dbReference type="GO" id="GO:0003899">
    <property type="term" value="F:DNA-directed RNA polymerase activity"/>
    <property type="evidence" value="ECO:0007669"/>
    <property type="project" value="UniProtKB-UniRule"/>
</dbReference>
<dbReference type="GO" id="GO:0006351">
    <property type="term" value="P:DNA-templated transcription"/>
    <property type="evidence" value="ECO:0007669"/>
    <property type="project" value="UniProtKB-UniRule"/>
</dbReference>
<dbReference type="Gene3D" id="3.90.940.10">
    <property type="match status" value="1"/>
</dbReference>
<dbReference type="HAMAP" id="MF_00366">
    <property type="entry name" value="RNApol_bact_RpoZ"/>
    <property type="match status" value="1"/>
</dbReference>
<dbReference type="InterPro" id="IPR003716">
    <property type="entry name" value="DNA-dir_RNA_pol_omega"/>
</dbReference>
<dbReference type="InterPro" id="IPR006110">
    <property type="entry name" value="Pol_omega/Rpo6/RPB6"/>
</dbReference>
<dbReference type="InterPro" id="IPR036161">
    <property type="entry name" value="RPB6/omega-like_sf"/>
</dbReference>
<dbReference type="NCBIfam" id="TIGR00690">
    <property type="entry name" value="rpoZ"/>
    <property type="match status" value="1"/>
</dbReference>
<dbReference type="PANTHER" id="PTHR34476">
    <property type="entry name" value="DNA-DIRECTED RNA POLYMERASE SUBUNIT OMEGA"/>
    <property type="match status" value="1"/>
</dbReference>
<dbReference type="PANTHER" id="PTHR34476:SF1">
    <property type="entry name" value="DNA-DIRECTED RNA POLYMERASE SUBUNIT OMEGA"/>
    <property type="match status" value="1"/>
</dbReference>
<dbReference type="Pfam" id="PF01192">
    <property type="entry name" value="RNA_pol_Rpb6"/>
    <property type="match status" value="1"/>
</dbReference>
<dbReference type="SMART" id="SM01409">
    <property type="entry name" value="RNA_pol_Rpb6"/>
    <property type="match status" value="1"/>
</dbReference>
<dbReference type="SUPFAM" id="SSF63562">
    <property type="entry name" value="RPB6/omega subunit-like"/>
    <property type="match status" value="1"/>
</dbReference>
<evidence type="ECO:0000255" key="1">
    <source>
        <dbReference type="HAMAP-Rule" id="MF_00366"/>
    </source>
</evidence>
<protein>
    <recommendedName>
        <fullName evidence="1">DNA-directed RNA polymerase subunit omega</fullName>
        <shortName evidence="1">RNAP omega subunit</shortName>
        <ecNumber evidence="1">2.7.7.6</ecNumber>
    </recommendedName>
    <alternativeName>
        <fullName evidence="1">RNA polymerase omega subunit</fullName>
    </alternativeName>
    <alternativeName>
        <fullName evidence="1">Transcriptase subunit omega</fullName>
    </alternativeName>
</protein>